<feature type="chain" id="PRO_0000046907" description="Protein abrupt">
    <location>
        <begin position="1"/>
        <end position="904"/>
    </location>
</feature>
<feature type="domain" description="BTB" evidence="1 9">
    <location>
        <begin position="103"/>
        <end position="168"/>
    </location>
</feature>
<feature type="zinc finger region" description="C2H2-type 1" evidence="2">
    <location>
        <begin position="544"/>
        <end position="567"/>
    </location>
</feature>
<feature type="zinc finger region" description="C2H2-type 2" evidence="2">
    <location>
        <begin position="573"/>
        <end position="596"/>
    </location>
</feature>
<feature type="region of interest" description="Disordered" evidence="3">
    <location>
        <begin position="1"/>
        <end position="30"/>
    </location>
</feature>
<feature type="region of interest" description="Disordered" evidence="3">
    <location>
        <begin position="53"/>
        <end position="72"/>
    </location>
</feature>
<feature type="region of interest" description="Disordered" evidence="3">
    <location>
        <begin position="204"/>
        <end position="287"/>
    </location>
</feature>
<feature type="region of interest" description="Disordered" evidence="3">
    <location>
        <begin position="349"/>
        <end position="390"/>
    </location>
</feature>
<feature type="region of interest" description="Disordered" evidence="3">
    <location>
        <begin position="411"/>
        <end position="438"/>
    </location>
</feature>
<feature type="region of interest" description="Disordered" evidence="3">
    <location>
        <begin position="451"/>
        <end position="501"/>
    </location>
</feature>
<feature type="region of interest" description="Disordered" evidence="3">
    <location>
        <begin position="633"/>
        <end position="696"/>
    </location>
</feature>
<feature type="region of interest" description="Disordered" evidence="3">
    <location>
        <begin position="832"/>
        <end position="904"/>
    </location>
</feature>
<feature type="compositionally biased region" description="Polar residues" evidence="3">
    <location>
        <begin position="1"/>
        <end position="15"/>
    </location>
</feature>
<feature type="compositionally biased region" description="Low complexity" evidence="3">
    <location>
        <begin position="204"/>
        <end position="238"/>
    </location>
</feature>
<feature type="compositionally biased region" description="Polar residues" evidence="3">
    <location>
        <begin position="239"/>
        <end position="253"/>
    </location>
</feature>
<feature type="compositionally biased region" description="Low complexity" evidence="3">
    <location>
        <begin position="254"/>
        <end position="286"/>
    </location>
</feature>
<feature type="compositionally biased region" description="Basic and acidic residues" evidence="3">
    <location>
        <begin position="429"/>
        <end position="438"/>
    </location>
</feature>
<feature type="compositionally biased region" description="Polar residues" evidence="3">
    <location>
        <begin position="452"/>
        <end position="461"/>
    </location>
</feature>
<feature type="compositionally biased region" description="Basic and acidic residues" evidence="3">
    <location>
        <begin position="481"/>
        <end position="500"/>
    </location>
</feature>
<feature type="compositionally biased region" description="Gly residues" evidence="3">
    <location>
        <begin position="642"/>
        <end position="655"/>
    </location>
</feature>
<feature type="compositionally biased region" description="Acidic residues" evidence="3">
    <location>
        <begin position="671"/>
        <end position="682"/>
    </location>
</feature>
<feature type="compositionally biased region" description="Basic and acidic residues" evidence="3">
    <location>
        <begin position="851"/>
        <end position="868"/>
    </location>
</feature>
<feature type="compositionally biased region" description="Polar residues" evidence="3">
    <location>
        <begin position="876"/>
        <end position="886"/>
    </location>
</feature>
<feature type="modified residue" description="Phosphoserine" evidence="5">
    <location>
        <position position="474"/>
    </location>
</feature>
<feature type="modified residue" description="Phosphoserine" evidence="5">
    <location>
        <position position="837"/>
    </location>
</feature>
<feature type="modified residue" description="Phosphoserine" evidence="5">
    <location>
        <position position="846"/>
    </location>
</feature>
<feature type="modified residue" description="Phosphoserine" evidence="5">
    <location>
        <position position="868"/>
    </location>
</feature>
<feature type="modified residue" description="Phosphoserine" evidence="5">
    <location>
        <position position="889"/>
    </location>
</feature>
<feature type="modified residue" description="Phosphoserine" evidence="5">
    <location>
        <position position="896"/>
    </location>
</feature>
<feature type="splice variant" id="VSP_047504" description="In isoform C." evidence="8">
    <location>
        <begin position="1"/>
        <end position="535"/>
    </location>
</feature>
<feature type="splice variant" id="VSP_006823" description="In isoform B." evidence="7">
    <location>
        <begin position="356"/>
        <end position="365"/>
    </location>
</feature>
<feature type="mutagenesis site" description="In allele AB-CLU2; lethal." evidence="6">
    <original>R</original>
    <variation>C</variation>
    <location>
        <position position="585"/>
    </location>
</feature>
<feature type="sequence conflict" description="In Ref. 4; AAN71338." evidence="9" ref="4">
    <original>H</original>
    <variation>P</variation>
    <location>
        <position position="264"/>
    </location>
</feature>
<feature type="sequence conflict" description="In Ref. 1; AAA86639." evidence="9" ref="1">
    <original>S</original>
    <variation>T</variation>
    <location>
        <position position="695"/>
    </location>
</feature>
<feature type="sequence conflict" description="In Ref. 4; AAN71338." evidence="9" ref="4">
    <original>N</original>
    <variation>D</variation>
    <location>
        <position position="888"/>
    </location>
</feature>
<accession>Q24174</accession>
<accession>E1JHF4</accession>
<accession>Q86NP4</accession>
<accession>Q9VKI1</accession>
<evidence type="ECO:0000255" key="1">
    <source>
        <dbReference type="PROSITE-ProRule" id="PRU00037"/>
    </source>
</evidence>
<evidence type="ECO:0000255" key="2">
    <source>
        <dbReference type="PROSITE-ProRule" id="PRU00042"/>
    </source>
</evidence>
<evidence type="ECO:0000256" key="3">
    <source>
        <dbReference type="SAM" id="MobiDB-lite"/>
    </source>
</evidence>
<evidence type="ECO:0000269" key="4">
    <source>
    </source>
</evidence>
<evidence type="ECO:0000269" key="5">
    <source>
    </source>
</evidence>
<evidence type="ECO:0000269" key="6">
    <source>
    </source>
</evidence>
<evidence type="ECO:0000303" key="7">
    <source>
    </source>
</evidence>
<evidence type="ECO:0000303" key="8">
    <source ref="5"/>
</evidence>
<evidence type="ECO:0000305" key="9"/>
<proteinExistence type="evidence at protein level"/>
<gene>
    <name type="primary">ab</name>
    <name type="synonym">clu</name>
    <name type="ORF">CG43860</name>
</gene>
<dbReference type="EMBL" id="U43733">
    <property type="protein sequence ID" value="AAA86639.1"/>
    <property type="molecule type" value="mRNA"/>
</dbReference>
<dbReference type="EMBL" id="AE014134">
    <property type="protein sequence ID" value="AAF53087.2"/>
    <property type="molecule type" value="Genomic_DNA"/>
</dbReference>
<dbReference type="EMBL" id="AE014134">
    <property type="protein sequence ID" value="AAN10774.1"/>
    <property type="molecule type" value="Genomic_DNA"/>
</dbReference>
<dbReference type="EMBL" id="AE014134">
    <property type="protein sequence ID" value="ACZ94239.1"/>
    <property type="molecule type" value="Genomic_DNA"/>
</dbReference>
<dbReference type="EMBL" id="AE014134">
    <property type="protein sequence ID" value="AGB92914.1"/>
    <property type="molecule type" value="Genomic_DNA"/>
</dbReference>
<dbReference type="EMBL" id="BT001583">
    <property type="protein sequence ID" value="AAN71338.1"/>
    <property type="molecule type" value="mRNA"/>
</dbReference>
<dbReference type="EMBL" id="BT003807">
    <property type="protein sequence ID" value="AAO41490.1"/>
    <property type="molecule type" value="mRNA"/>
</dbReference>
<dbReference type="RefSeq" id="NP_001162952.1">
    <molecule id="Q24174-2"/>
    <property type="nucleotide sequence ID" value="NM_001169481.2"/>
</dbReference>
<dbReference type="RefSeq" id="NP_001260379.1">
    <molecule id="Q24174-2"/>
    <property type="nucleotide sequence ID" value="NM_001273450.1"/>
</dbReference>
<dbReference type="RefSeq" id="NP_476562.1">
    <molecule id="Q24174-1"/>
    <property type="nucleotide sequence ID" value="NM_057214.5"/>
</dbReference>
<dbReference type="RefSeq" id="NP_476563.1">
    <molecule id="Q24174-2"/>
    <property type="nucleotide sequence ID" value="NM_057215.5"/>
</dbReference>
<dbReference type="SMR" id="Q24174"/>
<dbReference type="BioGRID" id="60620">
    <property type="interactions" value="17"/>
</dbReference>
<dbReference type="DIP" id="DIP-19247N"/>
<dbReference type="FunCoup" id="Q24174">
    <property type="interactions" value="287"/>
</dbReference>
<dbReference type="IntAct" id="Q24174">
    <property type="interactions" value="3"/>
</dbReference>
<dbReference type="STRING" id="7227.FBpp0304816"/>
<dbReference type="iPTMnet" id="Q24174"/>
<dbReference type="PaxDb" id="7227-FBpp0304816"/>
<dbReference type="DNASU" id="34560"/>
<dbReference type="EnsemblMetazoa" id="FBtr0332557">
    <molecule id="Q24174-2"/>
    <property type="protein sequence ID" value="FBpp0304815"/>
    <property type="gene ID" value="FBgn0264442"/>
</dbReference>
<dbReference type="EnsemblMetazoa" id="FBtr0332558">
    <molecule id="Q24174-1"/>
    <property type="protein sequence ID" value="FBpp0304816"/>
    <property type="gene ID" value="FBgn0264442"/>
</dbReference>
<dbReference type="EnsemblMetazoa" id="FBtr0332560">
    <molecule id="Q24174-2"/>
    <property type="protein sequence ID" value="FBpp0304818"/>
    <property type="gene ID" value="FBgn0264442"/>
</dbReference>
<dbReference type="EnsemblMetazoa" id="FBtr0332562">
    <molecule id="Q24174-2"/>
    <property type="protein sequence ID" value="FBpp0304820"/>
    <property type="gene ID" value="FBgn0264442"/>
</dbReference>
<dbReference type="GeneID" id="34560"/>
<dbReference type="KEGG" id="dme:Dmel_CG43860"/>
<dbReference type="UCSC" id="CG4807-RA">
    <molecule id="Q24174-1"/>
    <property type="organism name" value="d. melanogaster"/>
</dbReference>
<dbReference type="AGR" id="FB:FBgn0264442"/>
<dbReference type="CTD" id="34560"/>
<dbReference type="FlyBase" id="FBgn0264442">
    <property type="gene designation" value="ab"/>
</dbReference>
<dbReference type="VEuPathDB" id="VectorBase:FBgn0264442"/>
<dbReference type="eggNOG" id="ENOG502RR0V">
    <property type="taxonomic scope" value="Eukaryota"/>
</dbReference>
<dbReference type="GeneTree" id="ENSGT00530000064321"/>
<dbReference type="HOGENOM" id="CLU_007430_0_0_1"/>
<dbReference type="InParanoid" id="Q24174"/>
<dbReference type="OrthoDB" id="10261408at2759"/>
<dbReference type="PhylomeDB" id="Q24174"/>
<dbReference type="SignaLink" id="Q24174"/>
<dbReference type="BioGRID-ORCS" id="34560">
    <property type="hits" value="0 hits in 3 CRISPR screens"/>
</dbReference>
<dbReference type="GenomeRNAi" id="34560"/>
<dbReference type="PRO" id="PR:Q24174"/>
<dbReference type="Proteomes" id="UP000000803">
    <property type="component" value="Chromosome 2L"/>
</dbReference>
<dbReference type="Bgee" id="FBgn0264442">
    <property type="expression patterns" value="Expressed in optic-lobe-associated cortex glial cell in insect head and 224 other cell types or tissues"/>
</dbReference>
<dbReference type="ExpressionAtlas" id="Q24174">
    <property type="expression patterns" value="baseline and differential"/>
</dbReference>
<dbReference type="GO" id="GO:0005634">
    <property type="term" value="C:nucleus"/>
    <property type="evidence" value="ECO:0000314"/>
    <property type="project" value="FlyBase"/>
</dbReference>
<dbReference type="GO" id="GO:0003677">
    <property type="term" value="F:DNA binding"/>
    <property type="evidence" value="ECO:0007669"/>
    <property type="project" value="UniProtKB-KW"/>
</dbReference>
<dbReference type="GO" id="GO:0003700">
    <property type="term" value="F:DNA-binding transcription factor activity"/>
    <property type="evidence" value="ECO:0000303"/>
    <property type="project" value="UniProtKB"/>
</dbReference>
<dbReference type="GO" id="GO:0008270">
    <property type="term" value="F:zinc ion binding"/>
    <property type="evidence" value="ECO:0007669"/>
    <property type="project" value="UniProtKB-KW"/>
</dbReference>
<dbReference type="GO" id="GO:0016198">
    <property type="term" value="P:axon choice point recognition"/>
    <property type="evidence" value="ECO:0000304"/>
    <property type="project" value="FlyBase"/>
</dbReference>
<dbReference type="GO" id="GO:0007298">
    <property type="term" value="P:border follicle cell migration"/>
    <property type="evidence" value="ECO:0000315"/>
    <property type="project" value="FlyBase"/>
</dbReference>
<dbReference type="GO" id="GO:0048813">
    <property type="term" value="P:dendrite morphogenesis"/>
    <property type="evidence" value="ECO:0000315"/>
    <property type="project" value="FlyBase"/>
</dbReference>
<dbReference type="GO" id="GO:0016203">
    <property type="term" value="P:muscle attachment"/>
    <property type="evidence" value="ECO:0000315"/>
    <property type="project" value="UniProtKB"/>
</dbReference>
<dbReference type="GO" id="GO:0016319">
    <property type="term" value="P:mushroom body development"/>
    <property type="evidence" value="ECO:0000315"/>
    <property type="project" value="FlyBase"/>
</dbReference>
<dbReference type="GO" id="GO:0000122">
    <property type="term" value="P:negative regulation of transcription by RNA polymerase II"/>
    <property type="evidence" value="ECO:0000315"/>
    <property type="project" value="FlyBase"/>
</dbReference>
<dbReference type="GO" id="GO:0006355">
    <property type="term" value="P:regulation of DNA-templated transcription"/>
    <property type="evidence" value="ECO:0000303"/>
    <property type="project" value="UniProtKB"/>
</dbReference>
<dbReference type="GO" id="GO:0006357">
    <property type="term" value="P:regulation of transcription by RNA polymerase II"/>
    <property type="evidence" value="ECO:0000318"/>
    <property type="project" value="GO_Central"/>
</dbReference>
<dbReference type="GO" id="GO:0007423">
    <property type="term" value="P:sensory organ development"/>
    <property type="evidence" value="ECO:0000315"/>
    <property type="project" value="UniProtKB"/>
</dbReference>
<dbReference type="GO" id="GO:0008039">
    <property type="term" value="P:synaptic target recognition"/>
    <property type="evidence" value="ECO:0000315"/>
    <property type="project" value="UniProtKB"/>
</dbReference>
<dbReference type="GO" id="GO:0035220">
    <property type="term" value="P:wing disc development"/>
    <property type="evidence" value="ECO:0000315"/>
    <property type="project" value="FlyBase"/>
</dbReference>
<dbReference type="CDD" id="cd18315">
    <property type="entry name" value="BTB_POZ_BAB-like"/>
    <property type="match status" value="1"/>
</dbReference>
<dbReference type="FunFam" id="3.30.710.10:FF:000118">
    <property type="entry name" value="Abrupt, isoform B"/>
    <property type="match status" value="1"/>
</dbReference>
<dbReference type="Gene3D" id="3.30.160.60">
    <property type="entry name" value="Classic Zinc Finger"/>
    <property type="match status" value="1"/>
</dbReference>
<dbReference type="Gene3D" id="3.30.710.10">
    <property type="entry name" value="Potassium Channel Kv1.1, Chain A"/>
    <property type="match status" value="1"/>
</dbReference>
<dbReference type="InterPro" id="IPR000210">
    <property type="entry name" value="BTB/POZ_dom"/>
</dbReference>
<dbReference type="InterPro" id="IPR051095">
    <property type="entry name" value="Dros_DevTransReg"/>
</dbReference>
<dbReference type="InterPro" id="IPR011333">
    <property type="entry name" value="SKP1/BTB/POZ_sf"/>
</dbReference>
<dbReference type="InterPro" id="IPR013087">
    <property type="entry name" value="Znf_C2H2_type"/>
</dbReference>
<dbReference type="PANTHER" id="PTHR23110">
    <property type="entry name" value="BTB DOMAIN TRANSCRIPTION FACTOR"/>
    <property type="match status" value="1"/>
</dbReference>
<dbReference type="PANTHER" id="PTHR23110:SF98">
    <property type="entry name" value="PRE-LOLA-G, ISOFORM C-RELATED"/>
    <property type="match status" value="1"/>
</dbReference>
<dbReference type="Pfam" id="PF00651">
    <property type="entry name" value="BTB"/>
    <property type="match status" value="1"/>
</dbReference>
<dbReference type="Pfam" id="PF00096">
    <property type="entry name" value="zf-C2H2"/>
    <property type="match status" value="1"/>
</dbReference>
<dbReference type="SMART" id="SM00225">
    <property type="entry name" value="BTB"/>
    <property type="match status" value="1"/>
</dbReference>
<dbReference type="SMART" id="SM00355">
    <property type="entry name" value="ZnF_C2H2"/>
    <property type="match status" value="2"/>
</dbReference>
<dbReference type="SUPFAM" id="SSF54695">
    <property type="entry name" value="POZ domain"/>
    <property type="match status" value="1"/>
</dbReference>
<dbReference type="PROSITE" id="PS50097">
    <property type="entry name" value="BTB"/>
    <property type="match status" value="1"/>
</dbReference>
<dbReference type="PROSITE" id="PS00028">
    <property type="entry name" value="ZINC_FINGER_C2H2_1"/>
    <property type="match status" value="1"/>
</dbReference>
<dbReference type="PROSITE" id="PS50157">
    <property type="entry name" value="ZINC_FINGER_C2H2_2"/>
    <property type="match status" value="2"/>
</dbReference>
<protein>
    <recommendedName>
        <fullName>Protein abrupt</fullName>
    </recommendedName>
    <alternativeName>
        <fullName>Protein clueless</fullName>
    </alternativeName>
</protein>
<sequence>MTESTQLQTAENNNAGVVKMEPPPPATSSVSVSAAAAAHALSSLSSLTMAATGSALSPATPPPSLNLSHQQQQHQQHYALKWNDFQSSILSSFRHLRDEEDFVDVTLACDERSFTAHKVVLSACSPYFRRLLKANPCEHPIVILRDVRCDDVENLLSFMYNGEVNVSHEQLPDFLKTAHLLQIRGLADVNGGYPYSKALSAALSHNSSNNNNNNSSSNNSLSNNNNNNNNNAESSNHNKISSYLSPNQTSAACNNSSNSNSNNHSSSHNNSSSNNISGSLNSSLNSPFSAPQIPPPVTASSAAAAAAAAASLTAAVAAAAAATAASAGSSSSAASGQTSGTPAIQELKASSAASPVRNPNPNPSKASSSNHWDMGEMEGSRKSHLTPPPQKRIKSADLFRAQHGISPERLLLDREFPVAGQHPLTRNRSGRDTSKDRERNLELRESLLGQALENSNGQQANPKHELGQSAGEDSNSSDTEPSDRGDGQHDGTLDGIDNQRSHSFPNAFLGLQGIPGLLPGPSGINSDFVSRRSLEMRVRATDPRPCPKCGKIYRSAHTLRTHLEDKHTVCPGYRCVLCGTVAKSRNSLHSHMSRQHRGISTKDLPVLPMPSAFDPELASRLLAKAGVKISPAELRARASPTGGSGSSGGGGGGGSSQAKLDLSNASGGPMDDAEDSDDDPEDLTTGNGLYGMGGSSSDLSRYHESLLSNFGHARMRNEAAAVAATAAALGQPKDLGVQLPNSNAPGQSLLDTYLQFITENTFGMGMSQEQAAAAALRAKMAQLNAMGHSLDNLPPGLLPGQFDLSKLAAGNPAFGQSGPGLTIEPIMRHEQAAGNLSPNRPLALNSGGRMMGHDEMAENDGDMRREGSEPMDLGLDNNQSGSNHEVANSDAEENYSEDEGVHNT</sequence>
<reference evidence="9" key="1">
    <citation type="journal article" date="1995" name="Genes Dev.">
        <title>The Drosophila abrupt gene encodes a BTB-zinc finger regulatory protein that controls the specificity of neuromuscular connections.</title>
        <authorList>
            <person name="Hu S."/>
            <person name="Fambrough D."/>
            <person name="Atashi J.R."/>
            <person name="Goodman C.S."/>
            <person name="Crews S.T."/>
        </authorList>
    </citation>
    <scope>NUCLEOTIDE SEQUENCE [MRNA] (ISOFORM A)</scope>
    <scope>FUNCTION</scope>
    <scope>TISSUE SPECIFICITY</scope>
    <scope>DISRUPTION PHENOTYPE</scope>
    <scope>MUTAGENESIS OF ARG-585</scope>
    <source>
        <strain>Canton-S</strain>
        <tissue>Embryo</tissue>
    </source>
</reference>
<reference evidence="9" key="2">
    <citation type="journal article" date="2000" name="Science">
        <title>The genome sequence of Drosophila melanogaster.</title>
        <authorList>
            <person name="Adams M.D."/>
            <person name="Celniker S.E."/>
            <person name="Holt R.A."/>
            <person name="Evans C.A."/>
            <person name="Gocayne J.D."/>
            <person name="Amanatides P.G."/>
            <person name="Scherer S.E."/>
            <person name="Li P.W."/>
            <person name="Hoskins R.A."/>
            <person name="Galle R.F."/>
            <person name="George R.A."/>
            <person name="Lewis S.E."/>
            <person name="Richards S."/>
            <person name="Ashburner M."/>
            <person name="Henderson S.N."/>
            <person name="Sutton G.G."/>
            <person name="Wortman J.R."/>
            <person name="Yandell M.D."/>
            <person name="Zhang Q."/>
            <person name="Chen L.X."/>
            <person name="Brandon R.C."/>
            <person name="Rogers Y.-H.C."/>
            <person name="Blazej R.G."/>
            <person name="Champe M."/>
            <person name="Pfeiffer B.D."/>
            <person name="Wan K.H."/>
            <person name="Doyle C."/>
            <person name="Baxter E.G."/>
            <person name="Helt G."/>
            <person name="Nelson C.R."/>
            <person name="Miklos G.L.G."/>
            <person name="Abril J.F."/>
            <person name="Agbayani A."/>
            <person name="An H.-J."/>
            <person name="Andrews-Pfannkoch C."/>
            <person name="Baldwin D."/>
            <person name="Ballew R.M."/>
            <person name="Basu A."/>
            <person name="Baxendale J."/>
            <person name="Bayraktaroglu L."/>
            <person name="Beasley E.M."/>
            <person name="Beeson K.Y."/>
            <person name="Benos P.V."/>
            <person name="Berman B.P."/>
            <person name="Bhandari D."/>
            <person name="Bolshakov S."/>
            <person name="Borkova D."/>
            <person name="Botchan M.R."/>
            <person name="Bouck J."/>
            <person name="Brokstein P."/>
            <person name="Brottier P."/>
            <person name="Burtis K.C."/>
            <person name="Busam D.A."/>
            <person name="Butler H."/>
            <person name="Cadieu E."/>
            <person name="Center A."/>
            <person name="Chandra I."/>
            <person name="Cherry J.M."/>
            <person name="Cawley S."/>
            <person name="Dahlke C."/>
            <person name="Davenport L.B."/>
            <person name="Davies P."/>
            <person name="de Pablos B."/>
            <person name="Delcher A."/>
            <person name="Deng Z."/>
            <person name="Mays A.D."/>
            <person name="Dew I."/>
            <person name="Dietz S.M."/>
            <person name="Dodson K."/>
            <person name="Doup L.E."/>
            <person name="Downes M."/>
            <person name="Dugan-Rocha S."/>
            <person name="Dunkov B.C."/>
            <person name="Dunn P."/>
            <person name="Durbin K.J."/>
            <person name="Evangelista C.C."/>
            <person name="Ferraz C."/>
            <person name="Ferriera S."/>
            <person name="Fleischmann W."/>
            <person name="Fosler C."/>
            <person name="Gabrielian A.E."/>
            <person name="Garg N.S."/>
            <person name="Gelbart W.M."/>
            <person name="Glasser K."/>
            <person name="Glodek A."/>
            <person name="Gong F."/>
            <person name="Gorrell J.H."/>
            <person name="Gu Z."/>
            <person name="Guan P."/>
            <person name="Harris M."/>
            <person name="Harris N.L."/>
            <person name="Harvey D.A."/>
            <person name="Heiman T.J."/>
            <person name="Hernandez J.R."/>
            <person name="Houck J."/>
            <person name="Hostin D."/>
            <person name="Houston K.A."/>
            <person name="Howland T.J."/>
            <person name="Wei M.-H."/>
            <person name="Ibegwam C."/>
            <person name="Jalali M."/>
            <person name="Kalush F."/>
            <person name="Karpen G.H."/>
            <person name="Ke Z."/>
            <person name="Kennison J.A."/>
            <person name="Ketchum K.A."/>
            <person name="Kimmel B.E."/>
            <person name="Kodira C.D."/>
            <person name="Kraft C.L."/>
            <person name="Kravitz S."/>
            <person name="Kulp D."/>
            <person name="Lai Z."/>
            <person name="Lasko P."/>
            <person name="Lei Y."/>
            <person name="Levitsky A.A."/>
            <person name="Li J.H."/>
            <person name="Li Z."/>
            <person name="Liang Y."/>
            <person name="Lin X."/>
            <person name="Liu X."/>
            <person name="Mattei B."/>
            <person name="McIntosh T.C."/>
            <person name="McLeod M.P."/>
            <person name="McPherson D."/>
            <person name="Merkulov G."/>
            <person name="Milshina N.V."/>
            <person name="Mobarry C."/>
            <person name="Morris J."/>
            <person name="Moshrefi A."/>
            <person name="Mount S.M."/>
            <person name="Moy M."/>
            <person name="Murphy B."/>
            <person name="Murphy L."/>
            <person name="Muzny D.M."/>
            <person name="Nelson D.L."/>
            <person name="Nelson D.R."/>
            <person name="Nelson K.A."/>
            <person name="Nixon K."/>
            <person name="Nusskern D.R."/>
            <person name="Pacleb J.M."/>
            <person name="Palazzolo M."/>
            <person name="Pittman G.S."/>
            <person name="Pan S."/>
            <person name="Pollard J."/>
            <person name="Puri V."/>
            <person name="Reese M.G."/>
            <person name="Reinert K."/>
            <person name="Remington K."/>
            <person name="Saunders R.D.C."/>
            <person name="Scheeler F."/>
            <person name="Shen H."/>
            <person name="Shue B.C."/>
            <person name="Siden-Kiamos I."/>
            <person name="Simpson M."/>
            <person name="Skupski M.P."/>
            <person name="Smith T.J."/>
            <person name="Spier E."/>
            <person name="Spradling A.C."/>
            <person name="Stapleton M."/>
            <person name="Strong R."/>
            <person name="Sun E."/>
            <person name="Svirskas R."/>
            <person name="Tector C."/>
            <person name="Turner R."/>
            <person name="Venter E."/>
            <person name="Wang A.H."/>
            <person name="Wang X."/>
            <person name="Wang Z.-Y."/>
            <person name="Wassarman D.A."/>
            <person name="Weinstock G.M."/>
            <person name="Weissenbach J."/>
            <person name="Williams S.M."/>
            <person name="Woodage T."/>
            <person name="Worley K.C."/>
            <person name="Wu D."/>
            <person name="Yang S."/>
            <person name="Yao Q.A."/>
            <person name="Ye J."/>
            <person name="Yeh R.-F."/>
            <person name="Zaveri J.S."/>
            <person name="Zhan M."/>
            <person name="Zhang G."/>
            <person name="Zhao Q."/>
            <person name="Zheng L."/>
            <person name="Zheng X.H."/>
            <person name="Zhong F.N."/>
            <person name="Zhong W."/>
            <person name="Zhou X."/>
            <person name="Zhu S.C."/>
            <person name="Zhu X."/>
            <person name="Smith H.O."/>
            <person name="Gibbs R.A."/>
            <person name="Myers E.W."/>
            <person name="Rubin G.M."/>
            <person name="Venter J.C."/>
        </authorList>
    </citation>
    <scope>NUCLEOTIDE SEQUENCE [LARGE SCALE GENOMIC DNA]</scope>
    <source>
        <strain>Berkeley</strain>
    </source>
</reference>
<reference key="3">
    <citation type="journal article" date="2002" name="Genome Biol.">
        <title>Annotation of the Drosophila melanogaster euchromatic genome: a systematic review.</title>
        <authorList>
            <person name="Misra S."/>
            <person name="Crosby M.A."/>
            <person name="Mungall C.J."/>
            <person name="Matthews B.B."/>
            <person name="Campbell K.S."/>
            <person name="Hradecky P."/>
            <person name="Huang Y."/>
            <person name="Kaminker J.S."/>
            <person name="Millburn G.H."/>
            <person name="Prochnik S.E."/>
            <person name="Smith C.D."/>
            <person name="Tupy J.L."/>
            <person name="Whitfield E.J."/>
            <person name="Bayraktaroglu L."/>
            <person name="Berman B.P."/>
            <person name="Bettencourt B.R."/>
            <person name="Celniker S.E."/>
            <person name="de Grey A.D.N.J."/>
            <person name="Drysdale R.A."/>
            <person name="Harris N.L."/>
            <person name="Richter J."/>
            <person name="Russo S."/>
            <person name="Schroeder A.J."/>
            <person name="Shu S.Q."/>
            <person name="Stapleton M."/>
            <person name="Yamada C."/>
            <person name="Ashburner M."/>
            <person name="Gelbart W.M."/>
            <person name="Rubin G.M."/>
            <person name="Lewis S.E."/>
        </authorList>
    </citation>
    <scope>GENOME REANNOTATION</scope>
    <scope>ALTERNATIVE SPLICING</scope>
    <source>
        <strain>Berkeley</strain>
    </source>
</reference>
<reference key="4">
    <citation type="journal article" date="2002" name="Genome Biol.">
        <title>A Drosophila full-length cDNA resource.</title>
        <authorList>
            <person name="Stapleton M."/>
            <person name="Carlson J.W."/>
            <person name="Brokstein P."/>
            <person name="Yu C."/>
            <person name="Champe M."/>
            <person name="George R.A."/>
            <person name="Guarin H."/>
            <person name="Kronmiller B."/>
            <person name="Pacleb J.M."/>
            <person name="Park S."/>
            <person name="Wan K.H."/>
            <person name="Rubin G.M."/>
            <person name="Celniker S.E."/>
        </authorList>
    </citation>
    <scope>NUCLEOTIDE SEQUENCE [LARGE SCALE MRNA] (ISOFORM B)</scope>
    <source>
        <strain>Berkeley</strain>
        <tissue>Embryo</tissue>
    </source>
</reference>
<reference key="5">
    <citation type="submission" date="2003-02" db="EMBL/GenBank/DDBJ databases">
        <authorList>
            <person name="Stapleton M."/>
            <person name="Brokstein P."/>
            <person name="Hong L."/>
            <person name="Agbayani A."/>
            <person name="Carlson J."/>
            <person name="Champe M."/>
            <person name="Chavez C."/>
            <person name="Dorsett V."/>
            <person name="Dresnek D."/>
            <person name="Farfan D."/>
            <person name="Frise E."/>
            <person name="George R."/>
            <person name="Gonzalez M."/>
            <person name="Guarin H."/>
            <person name="Kronmiller B."/>
            <person name="Li P."/>
            <person name="Liao G."/>
            <person name="Miranda A."/>
            <person name="Mungall C.J."/>
            <person name="Nunoo J."/>
            <person name="Pacleb J."/>
            <person name="Paragas V."/>
            <person name="Park S."/>
            <person name="Patel S."/>
            <person name="Phouanenavong S."/>
            <person name="Wan K."/>
            <person name="Yu C."/>
            <person name="Lewis S.E."/>
            <person name="Rubin G.M."/>
            <person name="Celniker S."/>
        </authorList>
    </citation>
    <scope>NUCLEOTIDE SEQUENCE [LARGE SCALE MRNA] (ISOFORM C)</scope>
</reference>
<reference key="6">
    <citation type="journal article" date="2004" name="Neuron">
        <title>Development of morphological diversity of dendrites in Drosophila by the BTB-zinc finger protein abrupt.</title>
        <authorList>
            <person name="Sugimura K."/>
            <person name="Satoh D."/>
            <person name="Estes P."/>
            <person name="Crews S."/>
            <person name="Uemura T."/>
        </authorList>
    </citation>
    <scope>FUNCTION</scope>
    <scope>TISSUE SPECIFICITY</scope>
</reference>
<reference key="7">
    <citation type="journal article" date="2008" name="J. Proteome Res.">
        <title>Phosphoproteome analysis of Drosophila melanogaster embryos.</title>
        <authorList>
            <person name="Zhai B."/>
            <person name="Villen J."/>
            <person name="Beausoleil S.A."/>
            <person name="Mintseris J."/>
            <person name="Gygi S.P."/>
        </authorList>
    </citation>
    <scope>PHOSPHORYLATION [LARGE SCALE ANALYSIS] AT SER-474; SER-837; SER-846; SER-868; SER-889 AND SER-896</scope>
    <scope>IDENTIFICATION BY MASS SPECTROMETRY</scope>
    <source>
        <tissue>Embryo</tissue>
    </source>
</reference>
<keyword id="KW-0025">Alternative splicing</keyword>
<keyword id="KW-0217">Developmental protein</keyword>
<keyword id="KW-0238">DNA-binding</keyword>
<keyword id="KW-0479">Metal-binding</keyword>
<keyword id="KW-0539">Nucleus</keyword>
<keyword id="KW-0597">Phosphoprotein</keyword>
<keyword id="KW-1185">Reference proteome</keyword>
<keyword id="KW-0677">Repeat</keyword>
<keyword id="KW-0804">Transcription</keyword>
<keyword id="KW-0805">Transcription regulation</keyword>
<keyword id="KW-0862">Zinc</keyword>
<keyword id="KW-0863">Zinc-finger</keyword>
<comment type="function">
    <text evidence="4 6">Expression is vital for development; may be involved in transcriptional regulation. In embryos, muscle specific expression is required for segmental nerve b (SNb) motoneuron target recognition within ventral longitudinal muscles. Has a role in establishing and maintaining embryonic muscle attachments, adult sensory cell formation (macrochaetae) and morphogenesis of adult appendages (legs, antenna aristae and male external genitalia). Has a role in the morphogenesis of the class I dendritic neurons: selective expression of ab in class I da neurons plays a pivotal role in forming dendritic arbors, which are characteristic of the class I cells. The development of more complex arbors of class II-IV neurons depends on the absence of ab.</text>
</comment>
<comment type="subcellular location">
    <subcellularLocation>
        <location>Nucleus</location>
    </subcellularLocation>
</comment>
<comment type="alternative products">
    <event type="alternative splicing"/>
    <isoform>
        <id>Q24174-1</id>
        <name>A</name>
        <name>Long</name>
        <sequence type="displayed"/>
    </isoform>
    <isoform>
        <id>Q24174-2</id>
        <name>B</name>
        <name>Short</name>
        <name>D</name>
        <name>F</name>
        <sequence type="described" ref="VSP_006823"/>
    </isoform>
    <isoform>
        <id>Q24174-3</id>
        <name>C</name>
        <sequence type="described" ref="VSP_047504"/>
    </isoform>
</comment>
<comment type="tissue specificity">
    <text evidence="4 6">Expressed in CNS midline cells during embryonic stages 9-13. Expression also seen in cells of the stomagastric nervous system. Segmentally repeated stripes of ectodermal expression appear at stage 11 that become uniform by stage 12 and throughout embryogenesis. Expressed at variable levels in somatic muscles from stage 16 and in all imaginal disks during larval development. Expression is seen in da neurons that grow in two-dimensional dendrites underneath the epidermis during late embryonic, larval, and pupal stages.</text>
</comment>
<comment type="disruption phenotype">
    <text evidence="6">Flies exhibit disrupts to motoneuron guidance and connectivity. Loss of ab in class I neurons results in malformation of their typical comb-like arbor patterns and generation of supernumerary branch terminals.</text>
</comment>
<name>ABRU_DROME</name>
<organism>
    <name type="scientific">Drosophila melanogaster</name>
    <name type="common">Fruit fly</name>
    <dbReference type="NCBI Taxonomy" id="7227"/>
    <lineage>
        <taxon>Eukaryota</taxon>
        <taxon>Metazoa</taxon>
        <taxon>Ecdysozoa</taxon>
        <taxon>Arthropoda</taxon>
        <taxon>Hexapoda</taxon>
        <taxon>Insecta</taxon>
        <taxon>Pterygota</taxon>
        <taxon>Neoptera</taxon>
        <taxon>Endopterygota</taxon>
        <taxon>Diptera</taxon>
        <taxon>Brachycera</taxon>
        <taxon>Muscomorpha</taxon>
        <taxon>Ephydroidea</taxon>
        <taxon>Drosophilidae</taxon>
        <taxon>Drosophila</taxon>
        <taxon>Sophophora</taxon>
    </lineage>
</organism>